<organism>
    <name type="scientific">Synechococcus sp. (strain CC9605)</name>
    <dbReference type="NCBI Taxonomy" id="110662"/>
    <lineage>
        <taxon>Bacteria</taxon>
        <taxon>Bacillati</taxon>
        <taxon>Cyanobacteriota</taxon>
        <taxon>Cyanophyceae</taxon>
        <taxon>Synechococcales</taxon>
        <taxon>Synechococcaceae</taxon>
        <taxon>Synechococcus</taxon>
    </lineage>
</organism>
<gene>
    <name evidence="1" type="primary">psaE</name>
    <name type="ordered locus">Syncc9605_0493</name>
</gene>
<evidence type="ECO:0000255" key="1">
    <source>
        <dbReference type="HAMAP-Rule" id="MF_00613"/>
    </source>
</evidence>
<dbReference type="EMBL" id="CP000110">
    <property type="protein sequence ID" value="ABB34267.1"/>
    <property type="molecule type" value="Genomic_DNA"/>
</dbReference>
<dbReference type="RefSeq" id="WP_006851563.1">
    <property type="nucleotide sequence ID" value="NC_007516.1"/>
</dbReference>
<dbReference type="SMR" id="Q3AMB5"/>
<dbReference type="STRING" id="110662.Syncc9605_0493"/>
<dbReference type="KEGG" id="syd:Syncc9605_0493"/>
<dbReference type="eggNOG" id="ENOG503313D">
    <property type="taxonomic scope" value="Bacteria"/>
</dbReference>
<dbReference type="HOGENOM" id="CLU_136462_2_1_3"/>
<dbReference type="OrthoDB" id="427926at2"/>
<dbReference type="GO" id="GO:0009538">
    <property type="term" value="C:photosystem I reaction center"/>
    <property type="evidence" value="ECO:0007669"/>
    <property type="project" value="InterPro"/>
</dbReference>
<dbReference type="GO" id="GO:0031676">
    <property type="term" value="C:plasma membrane-derived thylakoid membrane"/>
    <property type="evidence" value="ECO:0007669"/>
    <property type="project" value="UniProtKB-SubCell"/>
</dbReference>
<dbReference type="GO" id="GO:0015979">
    <property type="term" value="P:photosynthesis"/>
    <property type="evidence" value="ECO:0007669"/>
    <property type="project" value="UniProtKB-UniRule"/>
</dbReference>
<dbReference type="Gene3D" id="2.30.30.50">
    <property type="match status" value="1"/>
</dbReference>
<dbReference type="HAMAP" id="MF_00613">
    <property type="entry name" value="PSI_PsaE"/>
    <property type="match status" value="1"/>
</dbReference>
<dbReference type="InterPro" id="IPR008990">
    <property type="entry name" value="Elect_transpt_acc-like_dom_sf"/>
</dbReference>
<dbReference type="InterPro" id="IPR003375">
    <property type="entry name" value="PSI_PsaE"/>
</dbReference>
<dbReference type="NCBIfam" id="NF002745">
    <property type="entry name" value="PRK02749.1"/>
    <property type="match status" value="1"/>
</dbReference>
<dbReference type="PANTHER" id="PTHR34549">
    <property type="entry name" value="PHOTOSYSTEM I REACTION CENTER SUBUNIT IV A, CHLOROPLASTIC-RELATED"/>
    <property type="match status" value="1"/>
</dbReference>
<dbReference type="PANTHER" id="PTHR34549:SF2">
    <property type="entry name" value="PHOTOSYSTEM I SUBUNIT IV"/>
    <property type="match status" value="1"/>
</dbReference>
<dbReference type="Pfam" id="PF02427">
    <property type="entry name" value="PSI_PsaE"/>
    <property type="match status" value="1"/>
</dbReference>
<dbReference type="SUPFAM" id="SSF50090">
    <property type="entry name" value="Electron transport accessory proteins"/>
    <property type="match status" value="1"/>
</dbReference>
<sequence length="69" mass="7591">MAITRGAKVRIKRPESYWFNEVGTVASIDTSGIRYPVVVRFEKVNYSGLQGVDGGINTNNFAEAELEPA</sequence>
<feature type="chain" id="PRO_1000061315" description="Photosystem I reaction center subunit IV">
    <location>
        <begin position="1"/>
        <end position="69"/>
    </location>
</feature>
<protein>
    <recommendedName>
        <fullName evidence="1">Photosystem I reaction center subunit IV</fullName>
    </recommendedName>
</protein>
<keyword id="KW-0472">Membrane</keyword>
<keyword id="KW-0602">Photosynthesis</keyword>
<keyword id="KW-0603">Photosystem I</keyword>
<keyword id="KW-0793">Thylakoid</keyword>
<proteinExistence type="inferred from homology"/>
<name>PSAE_SYNSC</name>
<comment type="function">
    <text evidence="1">Stabilizes the interaction between PsaC and the PSI core, assists the docking of the ferredoxin to PSI and interacts with ferredoxin-NADP oxidoreductase.</text>
</comment>
<comment type="subcellular location">
    <subcellularLocation>
        <location evidence="1">Cellular thylakoid membrane</location>
        <topology evidence="1">Peripheral membrane protein</topology>
    </subcellularLocation>
</comment>
<comment type="similarity">
    <text evidence="1">Belongs to the PsaE family.</text>
</comment>
<reference key="1">
    <citation type="submission" date="2005-07" db="EMBL/GenBank/DDBJ databases">
        <title>Complete sequence of Synechococcus sp. CC9605.</title>
        <authorList>
            <consortium name="US DOE Joint Genome Institute"/>
            <person name="Copeland A."/>
            <person name="Lucas S."/>
            <person name="Lapidus A."/>
            <person name="Barry K."/>
            <person name="Detter J.C."/>
            <person name="Glavina T."/>
            <person name="Hammon N."/>
            <person name="Israni S."/>
            <person name="Pitluck S."/>
            <person name="Schmutz J."/>
            <person name="Martinez M."/>
            <person name="Larimer F."/>
            <person name="Land M."/>
            <person name="Kyrpides N."/>
            <person name="Ivanova N."/>
            <person name="Richardson P."/>
        </authorList>
    </citation>
    <scope>NUCLEOTIDE SEQUENCE [LARGE SCALE GENOMIC DNA]</scope>
    <source>
        <strain>CC9605</strain>
    </source>
</reference>
<accession>Q3AMB5</accession>